<evidence type="ECO:0000255" key="1">
    <source>
        <dbReference type="HAMAP-Rule" id="MF_01545"/>
    </source>
</evidence>
<dbReference type="EMBL" id="CP000950">
    <property type="protein sequence ID" value="ACA66788.1"/>
    <property type="molecule type" value="Genomic_DNA"/>
</dbReference>
<dbReference type="RefSeq" id="WP_002210095.1">
    <property type="nucleotide sequence ID" value="NZ_CP009792.1"/>
</dbReference>
<dbReference type="SMR" id="B1JKI3"/>
<dbReference type="GeneID" id="57975111"/>
<dbReference type="KEGG" id="ypy:YPK_0485"/>
<dbReference type="PATRIC" id="fig|502800.11.peg.1095"/>
<dbReference type="GO" id="GO:0005886">
    <property type="term" value="C:plasma membrane"/>
    <property type="evidence" value="ECO:0007669"/>
    <property type="project" value="UniProtKB-SubCell"/>
</dbReference>
<dbReference type="GO" id="GO:0022857">
    <property type="term" value="F:transmembrane transporter activity"/>
    <property type="evidence" value="ECO:0007669"/>
    <property type="project" value="UniProtKB-UniRule"/>
</dbReference>
<dbReference type="GO" id="GO:0046942">
    <property type="term" value="P:carboxylic acid transport"/>
    <property type="evidence" value="ECO:0007669"/>
    <property type="project" value="InterPro"/>
</dbReference>
<dbReference type="HAMAP" id="MF_01545">
    <property type="entry name" value="AaeB"/>
    <property type="match status" value="1"/>
</dbReference>
<dbReference type="InterPro" id="IPR006726">
    <property type="entry name" value="PHBA_efflux_AaeB/fusaric-R"/>
</dbReference>
<dbReference type="InterPro" id="IPR023706">
    <property type="entry name" value="PHBA_efflux_pump_AaeB"/>
</dbReference>
<dbReference type="NCBIfam" id="NF007916">
    <property type="entry name" value="PRK10631.1"/>
    <property type="match status" value="1"/>
</dbReference>
<dbReference type="PANTHER" id="PTHR30509:SF9">
    <property type="entry name" value="MULTIDRUG RESISTANCE PROTEIN MDTO"/>
    <property type="match status" value="1"/>
</dbReference>
<dbReference type="PANTHER" id="PTHR30509">
    <property type="entry name" value="P-HYDROXYBENZOIC ACID EFFLUX PUMP SUBUNIT-RELATED"/>
    <property type="match status" value="1"/>
</dbReference>
<dbReference type="Pfam" id="PF04632">
    <property type="entry name" value="FUSC"/>
    <property type="match status" value="1"/>
</dbReference>
<organism>
    <name type="scientific">Yersinia pseudotuberculosis serotype O:3 (strain YPIII)</name>
    <dbReference type="NCBI Taxonomy" id="502800"/>
    <lineage>
        <taxon>Bacteria</taxon>
        <taxon>Pseudomonadati</taxon>
        <taxon>Pseudomonadota</taxon>
        <taxon>Gammaproteobacteria</taxon>
        <taxon>Enterobacterales</taxon>
        <taxon>Yersiniaceae</taxon>
        <taxon>Yersinia</taxon>
    </lineage>
</organism>
<reference key="1">
    <citation type="submission" date="2008-02" db="EMBL/GenBank/DDBJ databases">
        <title>Complete sequence of Yersinia pseudotuberculosis YPIII.</title>
        <authorList>
            <consortium name="US DOE Joint Genome Institute"/>
            <person name="Copeland A."/>
            <person name="Lucas S."/>
            <person name="Lapidus A."/>
            <person name="Glavina del Rio T."/>
            <person name="Dalin E."/>
            <person name="Tice H."/>
            <person name="Bruce D."/>
            <person name="Goodwin L."/>
            <person name="Pitluck S."/>
            <person name="Munk A.C."/>
            <person name="Brettin T."/>
            <person name="Detter J.C."/>
            <person name="Han C."/>
            <person name="Tapia R."/>
            <person name="Schmutz J."/>
            <person name="Larimer F."/>
            <person name="Land M."/>
            <person name="Hauser L."/>
            <person name="Challacombe J.F."/>
            <person name="Green L."/>
            <person name="Lindler L.E."/>
            <person name="Nikolich M.P."/>
            <person name="Richardson P."/>
        </authorList>
    </citation>
    <scope>NUCLEOTIDE SEQUENCE [LARGE SCALE GENOMIC DNA]</scope>
    <source>
        <strain>YPIII</strain>
    </source>
</reference>
<comment type="function">
    <text evidence="1">Forms an efflux pump with AaeA. Could function as a metabolic relief valve, allowing to eliminate certain compounds when they accumulate to high levels in the cell.</text>
</comment>
<comment type="subcellular location">
    <subcellularLocation>
        <location evidence="1">Cell inner membrane</location>
        <topology evidence="1">Multi-pass membrane protein</topology>
    </subcellularLocation>
</comment>
<comment type="similarity">
    <text evidence="1">Belongs to the aromatic acid exporter ArAE (TC 2.A.85) family.</text>
</comment>
<keyword id="KW-0997">Cell inner membrane</keyword>
<keyword id="KW-1003">Cell membrane</keyword>
<keyword id="KW-0472">Membrane</keyword>
<keyword id="KW-0812">Transmembrane</keyword>
<keyword id="KW-1133">Transmembrane helix</keyword>
<keyword id="KW-0813">Transport</keyword>
<sequence>MTHPSFIRLRFAFKLSFAIVAALFLGFHLQLETPRWSVLTAAIVSAGPAFAAGGEPFSGAIRHRGWLRIIGTFIGCIGGLVIIVLTIRAPVLTLMLCCLWAGICTWISSLVRVENSYAFGLAGYTALIIIVTTGETPLLTPQFAVERCSEIVLGIVCAVMADLLFSPRSIKQDIDRLVDKVLVDQYRLLQLCIQPAEKSEIDRAWNELVKNTTSLNGMRSYLMMESSRWQRCNRRLQVLHTESLALITQACETYLVMSNHPEVISAELKTMLSEPAQTPAEIHQQMKKLRQFIAASHSEAIPHTISSWVGAATRYLLLSKGIQTNSSINQVEEDILAGDAPVKPISAEGHHAMINGLRTGIATAIGGLFWLWTGWTSGAGCMVMIAVVTSLAMRTPNPRRMALDFLVGVIIALPIGALYFMFIIPSTQQSMLLLCISLGVLAFIIGIEVQKRRLGSLGTLASTINIIVLSNPMIFNVRQFLDSALGQIVGCFVSLIVLLLIRDNAKDRTGRTLLNRFVYSAVSALTTNKTKRGENHLPALYQQLNQLLMMFPADIDKYRLALTLIIAHQRLNRTEIPVNAELSAFHKQIRSTAERVITVNNDQKRRYYFARLLQELDQYQQKLVDYQAADAVIRPVKRLTEMLRKYQSALI</sequence>
<feature type="chain" id="PRO_1000146751" description="p-hydroxybenzoic acid efflux pump subunit AaeB">
    <location>
        <begin position="1"/>
        <end position="651"/>
    </location>
</feature>
<feature type="transmembrane region" description="Helical" evidence="1">
    <location>
        <begin position="11"/>
        <end position="31"/>
    </location>
</feature>
<feature type="transmembrane region" description="Helical" evidence="1">
    <location>
        <begin position="41"/>
        <end position="61"/>
    </location>
</feature>
<feature type="transmembrane region" description="Helical" evidence="1">
    <location>
        <begin position="67"/>
        <end position="87"/>
    </location>
</feature>
<feature type="transmembrane region" description="Helical" evidence="1">
    <location>
        <begin position="91"/>
        <end position="111"/>
    </location>
</feature>
<feature type="transmembrane region" description="Helical" evidence="1">
    <location>
        <begin position="119"/>
        <end position="139"/>
    </location>
</feature>
<feature type="transmembrane region" description="Helical" evidence="1">
    <location>
        <begin position="150"/>
        <end position="170"/>
    </location>
</feature>
<feature type="transmembrane region" description="Helical" evidence="1">
    <location>
        <begin position="368"/>
        <end position="388"/>
    </location>
</feature>
<feature type="transmembrane region" description="Helical" evidence="1">
    <location>
        <begin position="405"/>
        <end position="425"/>
    </location>
</feature>
<feature type="transmembrane region" description="Helical" evidence="1">
    <location>
        <begin position="429"/>
        <end position="449"/>
    </location>
</feature>
<feature type="transmembrane region" description="Helical" evidence="1">
    <location>
        <begin position="455"/>
        <end position="475"/>
    </location>
</feature>
<feature type="transmembrane region" description="Helical" evidence="1">
    <location>
        <begin position="481"/>
        <end position="501"/>
    </location>
</feature>
<gene>
    <name evidence="1" type="primary">aaeB</name>
    <name type="ordered locus">YPK_0485</name>
</gene>
<proteinExistence type="inferred from homology"/>
<name>AAEB_YERPY</name>
<accession>B1JKI3</accession>
<protein>
    <recommendedName>
        <fullName evidence="1">p-hydroxybenzoic acid efflux pump subunit AaeB</fullName>
        <shortName evidence="1">pHBA efflux pump protein B</shortName>
    </recommendedName>
</protein>